<accession>P0C6B8</accession>
<reference key="1">
    <citation type="journal article" date="2004" name="Nature">
        <title>Genome sequence of the Brown Norway rat yields insights into mammalian evolution.</title>
        <authorList>
            <person name="Gibbs R.A."/>
            <person name="Weinstock G.M."/>
            <person name="Metzker M.L."/>
            <person name="Muzny D.M."/>
            <person name="Sodergren E.J."/>
            <person name="Scherer S."/>
            <person name="Scott G."/>
            <person name="Steffen D."/>
            <person name="Worley K.C."/>
            <person name="Burch P.E."/>
            <person name="Okwuonu G."/>
            <person name="Hines S."/>
            <person name="Lewis L."/>
            <person name="Deramo C."/>
            <person name="Delgado O."/>
            <person name="Dugan-Rocha S."/>
            <person name="Miner G."/>
            <person name="Morgan M."/>
            <person name="Hawes A."/>
            <person name="Gill R."/>
            <person name="Holt R.A."/>
            <person name="Adams M.D."/>
            <person name="Amanatides P.G."/>
            <person name="Baden-Tillson H."/>
            <person name="Barnstead M."/>
            <person name="Chin S."/>
            <person name="Evans C.A."/>
            <person name="Ferriera S."/>
            <person name="Fosler C."/>
            <person name="Glodek A."/>
            <person name="Gu Z."/>
            <person name="Jennings D."/>
            <person name="Kraft C.L."/>
            <person name="Nguyen T."/>
            <person name="Pfannkoch C.M."/>
            <person name="Sitter C."/>
            <person name="Sutton G.G."/>
            <person name="Venter J.C."/>
            <person name="Woodage T."/>
            <person name="Smith D."/>
            <person name="Lee H.-M."/>
            <person name="Gustafson E."/>
            <person name="Cahill P."/>
            <person name="Kana A."/>
            <person name="Doucette-Stamm L."/>
            <person name="Weinstock K."/>
            <person name="Fechtel K."/>
            <person name="Weiss R.B."/>
            <person name="Dunn D.M."/>
            <person name="Green E.D."/>
            <person name="Blakesley R.W."/>
            <person name="Bouffard G.G."/>
            <person name="De Jong P.J."/>
            <person name="Osoegawa K."/>
            <person name="Zhu B."/>
            <person name="Marra M."/>
            <person name="Schein J."/>
            <person name="Bosdet I."/>
            <person name="Fjell C."/>
            <person name="Jones S."/>
            <person name="Krzywinski M."/>
            <person name="Mathewson C."/>
            <person name="Siddiqui A."/>
            <person name="Wye N."/>
            <person name="McPherson J."/>
            <person name="Zhao S."/>
            <person name="Fraser C.M."/>
            <person name="Shetty J."/>
            <person name="Shatsman S."/>
            <person name="Geer K."/>
            <person name="Chen Y."/>
            <person name="Abramzon S."/>
            <person name="Nierman W.C."/>
            <person name="Havlak P.H."/>
            <person name="Chen R."/>
            <person name="Durbin K.J."/>
            <person name="Egan A."/>
            <person name="Ren Y."/>
            <person name="Song X.-Z."/>
            <person name="Li B."/>
            <person name="Liu Y."/>
            <person name="Qin X."/>
            <person name="Cawley S."/>
            <person name="Cooney A.J."/>
            <person name="D'Souza L.M."/>
            <person name="Martin K."/>
            <person name="Wu J.Q."/>
            <person name="Gonzalez-Garay M.L."/>
            <person name="Jackson A.R."/>
            <person name="Kalafus K.J."/>
            <person name="McLeod M.P."/>
            <person name="Milosavljevic A."/>
            <person name="Virk D."/>
            <person name="Volkov A."/>
            <person name="Wheeler D.A."/>
            <person name="Zhang Z."/>
            <person name="Bailey J.A."/>
            <person name="Eichler E.E."/>
            <person name="Tuzun E."/>
            <person name="Birney E."/>
            <person name="Mongin E."/>
            <person name="Ureta-Vidal A."/>
            <person name="Woodwark C."/>
            <person name="Zdobnov E."/>
            <person name="Bork P."/>
            <person name="Suyama M."/>
            <person name="Torrents D."/>
            <person name="Alexandersson M."/>
            <person name="Trask B.J."/>
            <person name="Young J.M."/>
            <person name="Huang H."/>
            <person name="Wang H."/>
            <person name="Xing H."/>
            <person name="Daniels S."/>
            <person name="Gietzen D."/>
            <person name="Schmidt J."/>
            <person name="Stevens K."/>
            <person name="Vitt U."/>
            <person name="Wingrove J."/>
            <person name="Camara F."/>
            <person name="Mar Alba M."/>
            <person name="Abril J.F."/>
            <person name="Guigo R."/>
            <person name="Smit A."/>
            <person name="Dubchak I."/>
            <person name="Rubin E.M."/>
            <person name="Couronne O."/>
            <person name="Poliakov A."/>
            <person name="Huebner N."/>
            <person name="Ganten D."/>
            <person name="Goesele C."/>
            <person name="Hummel O."/>
            <person name="Kreitler T."/>
            <person name="Lee Y.-A."/>
            <person name="Monti J."/>
            <person name="Schulz H."/>
            <person name="Zimdahl H."/>
            <person name="Himmelbauer H."/>
            <person name="Lehrach H."/>
            <person name="Jacob H.J."/>
            <person name="Bromberg S."/>
            <person name="Gullings-Handley J."/>
            <person name="Jensen-Seaman M.I."/>
            <person name="Kwitek A.E."/>
            <person name="Lazar J."/>
            <person name="Pasko D."/>
            <person name="Tonellato P.J."/>
            <person name="Twigger S."/>
            <person name="Ponting C.P."/>
            <person name="Duarte J.M."/>
            <person name="Rice S."/>
            <person name="Goodstadt L."/>
            <person name="Beatson S.A."/>
            <person name="Emes R.D."/>
            <person name="Winter E.E."/>
            <person name="Webber C."/>
            <person name="Brandt P."/>
            <person name="Nyakatura G."/>
            <person name="Adetobi M."/>
            <person name="Chiaromonte F."/>
            <person name="Elnitski L."/>
            <person name="Eswara P."/>
            <person name="Hardison R.C."/>
            <person name="Hou M."/>
            <person name="Kolbe D."/>
            <person name="Makova K."/>
            <person name="Miller W."/>
            <person name="Nekrutenko A."/>
            <person name="Riemer C."/>
            <person name="Schwartz S."/>
            <person name="Taylor J."/>
            <person name="Yang S."/>
            <person name="Zhang Y."/>
            <person name="Lindpaintner K."/>
            <person name="Andrews T.D."/>
            <person name="Caccamo M."/>
            <person name="Clamp M."/>
            <person name="Clarke L."/>
            <person name="Curwen V."/>
            <person name="Durbin R.M."/>
            <person name="Eyras E."/>
            <person name="Searle S.M."/>
            <person name="Cooper G.M."/>
            <person name="Batzoglou S."/>
            <person name="Brudno M."/>
            <person name="Sidow A."/>
            <person name="Stone E.A."/>
            <person name="Payseur B.A."/>
            <person name="Bourque G."/>
            <person name="Lopez-Otin C."/>
            <person name="Puente X.S."/>
            <person name="Chakrabarti K."/>
            <person name="Chatterji S."/>
            <person name="Dewey C."/>
            <person name="Pachter L."/>
            <person name="Bray N."/>
            <person name="Yap V.B."/>
            <person name="Caspi A."/>
            <person name="Tesler G."/>
            <person name="Pevzner P.A."/>
            <person name="Haussler D."/>
            <person name="Roskin K.M."/>
            <person name="Baertsch R."/>
            <person name="Clawson H."/>
            <person name="Furey T.S."/>
            <person name="Hinrichs A.S."/>
            <person name="Karolchik D."/>
            <person name="Kent W.J."/>
            <person name="Rosenbloom K.R."/>
            <person name="Trumbower H."/>
            <person name="Weirauch M."/>
            <person name="Cooper D.N."/>
            <person name="Stenson P.D."/>
            <person name="Ma B."/>
            <person name="Brent M."/>
            <person name="Arumugam M."/>
            <person name="Shteynberg D."/>
            <person name="Copley R.R."/>
            <person name="Taylor M.S."/>
            <person name="Riethman H."/>
            <person name="Mudunuri U."/>
            <person name="Peterson J."/>
            <person name="Guyer M."/>
            <person name="Felsenfeld A."/>
            <person name="Old S."/>
            <person name="Mockrin S."/>
            <person name="Collins F.S."/>
        </authorList>
    </citation>
    <scope>NUCLEOTIDE SEQUENCE [LARGE SCALE GENOMIC DNA]</scope>
    <source>
        <strain>Brown Norway</strain>
    </source>
</reference>
<reference key="2">
    <citation type="journal article" date="2007" name="J. Cell. Physiol.">
        <title>SVEP1 expression is regulated in estrogen-dependent manner.</title>
        <authorList>
            <person name="Shur I."/>
            <person name="Zemer-Tov E."/>
            <person name="Socher R."/>
            <person name="Benayahu D."/>
        </authorList>
    </citation>
    <scope>INDUCTION</scope>
</reference>
<keyword id="KW-0106">Calcium</keyword>
<keyword id="KW-0130">Cell adhesion</keyword>
<keyword id="KW-0963">Cytoplasm</keyword>
<keyword id="KW-1015">Disulfide bond</keyword>
<keyword id="KW-0245">EGF-like domain</keyword>
<keyword id="KW-0325">Glycoprotein</keyword>
<keyword id="KW-0472">Membrane</keyword>
<keyword id="KW-0539">Nucleus</keyword>
<keyword id="KW-1185">Reference proteome</keyword>
<keyword id="KW-0677">Repeat</keyword>
<keyword id="KW-0964">Secreted</keyword>
<keyword id="KW-0732">Signal</keyword>
<comment type="function">
    <text evidence="2 3">Required for morphological development, cell alignment and migration of lymphatic endothelial cells during embryonic development, potentially via modulation of ANGPT2-TIE1 signaling and subsequent activation of FOXC2 transcription (By similarity). Required for embryonic lymphatic vascular development, via mediating the correct formation of the first lymphovenous contact site and tight association of the lymphatic endothelium with the venous endothelium (By similarity). Represses PRKCA-mediated L-type voltage-gated channel Ca(2+) influx and ROCK-mediated calcium sensitivity in vascular smooth muscle cells, via its interaction with integrins, thereby inhibiting vasocontraction (By similarity). Promotes platelet activation, via its interaction with PEAR1 and subsequent activation of AKT/mTOR signaling (By similarity). Plays a role in epidermal development and keratinocyte differentiation, independent of cell-cell adhesion (By similarity). May play a role in initial cell attachment of stromal osteogenic cells (By similarity). May promote myoblast cell adhesion when in the presence of integrin ITGA9:ITGB1 (By similarity).</text>
</comment>
<comment type="subunit">
    <text evidence="2 3">Interacts (via Sushi domain 21) with ITGA9:ITGB1; thereby inhibits Ca(2+) intracellular signaling and as a result represses vasocontraction (By similarity). Interacts (via Sushi domain 21) with ITGA4:ITGB1; thereby inhibits Ca(2+) intracellular signaling and as a result represses vasocontraction (By similarity). Interacts with ANGPT1 and ANGPT2 (By similarity). Interacts with PEAR1 (via extracellular domain) (By similarity). Interacts with HSPG2, TLN1, FN1, COPA, CCT2, IQGAP1, LAMC1 and NID1 (By similarity). Interacts (via C-terminus) with TIE1 (By similarity).</text>
</comment>
<comment type="subcellular location">
    <subcellularLocation>
        <location evidence="2">Secreted</location>
    </subcellularLocation>
    <subcellularLocation>
        <location evidence="3">Nucleus</location>
    </subcellularLocation>
    <subcellularLocation>
        <location evidence="3">Cytoplasm</location>
    </subcellularLocation>
    <subcellularLocation>
        <location evidence="3">Membrane</location>
        <topology evidence="3">Peripheral membrane protein</topology>
    </subcellularLocation>
</comment>
<comment type="induction">
    <text evidence="10">Estrogen-dependent; induced upon 17betaE2 treatment in cultured osteoblasts (at protein level).</text>
</comment>
<evidence type="ECO:0000250" key="1"/>
<evidence type="ECO:0000250" key="2">
    <source>
        <dbReference type="UniProtKB" id="A2AVA0"/>
    </source>
</evidence>
<evidence type="ECO:0000250" key="3">
    <source>
        <dbReference type="UniProtKB" id="Q4LDE5"/>
    </source>
</evidence>
<evidence type="ECO:0000255" key="4"/>
<evidence type="ECO:0000255" key="5">
    <source>
        <dbReference type="PROSITE-ProRule" id="PRU00076"/>
    </source>
</evidence>
<evidence type="ECO:0000255" key="6">
    <source>
        <dbReference type="PROSITE-ProRule" id="PRU00113"/>
    </source>
</evidence>
<evidence type="ECO:0000255" key="7">
    <source>
        <dbReference type="PROSITE-ProRule" id="PRU00219"/>
    </source>
</evidence>
<evidence type="ECO:0000255" key="8">
    <source>
        <dbReference type="PROSITE-ProRule" id="PRU00302"/>
    </source>
</evidence>
<evidence type="ECO:0000255" key="9">
    <source>
        <dbReference type="PROSITE-ProRule" id="PRU01172"/>
    </source>
</evidence>
<evidence type="ECO:0000269" key="10">
    <source>
    </source>
</evidence>
<name>SVEP1_RAT</name>
<protein>
    <recommendedName>
        <fullName>Sushi, von Willebrand factor type A, EGF and pentraxin domain-containing protein 1</fullName>
    </recommendedName>
</protein>
<sequence>MWTRLAFCCWALALVSGWTNFQPMAPSLNFSFRLFPEASPGALGRLAVPPRSGEEEAVGSKVERLGRTFRSRVRRLRELSDRLELVFLVDESSSVGQTNFLNELKFVRKLLSDFPVVSTATRVAIVTFSSKNNVVARVDYISTSRAHQHKCALLSREIPAITYRGGGTYTMGAFQQAAQILRHSRENSTKVIFLITDGYSNGGDPRPIAASLRDFGVEIFTFGIWQGNIRELNDMASTPKEEHCYLLHSFEEFEALARRALHEDLPSGSFIQEDMAHCSYLCEAGRDCCDRMASCKCGTHTGQFECICEKGYYGKGLQYECTACPPGTYKPEASPGGISTCIPCPDENHTSPPGSTAPEDCVCREGYQRSGQTCEVVHCPALKPPENGFFIQNTCKNHFNAACGVRCRPGFDLVGSSIHLCQPNGLWSGTESFCRVRTCPHLRQPKHGHISCSTVEMSYNTVCLVTCNEGYRLEGHAKLTCQGNAQWDGTEPRCVERHCATFQKPKGVIISPPSCGKQPAKPGMICQLGCRQGYILSGIREVRCATSGKWSARVQTAVCKDVEAPQISCPNDIKAKTEGQQDSANVTWQVPTAKDNSGEKVSVHVHPAFSPPYLFPIGEVAITYTATDSSGNQASCTFYIKVIDVEPPVIDWCRSPPPIQVVEKEHPASWDEPQFSDNSGAELVITSSHTQGDLFPHGETVVWYTATDPSGNNRTCDIHIVIKGSPCEVPFTPVNGDFICAQDSAGVNCSLTCREGYDFTEGSTEKYYCAFEDGIWRPPYSTEWPDCAIKRFANHGFKSFEMLYKTTRCDDMDLFKKFSAAFETTLGKMVPSFCSDADDIDCRLEDLTKKYCIEYNYNYENGFAIGPGGWGAGNRLDYSYDHFLDVVQETPADVGKTRSSRIKRTVPLSDPQIQLIFNITASVPLPEERNDTVELENQQRLIRTLETITNRLKSTLNKGPMYSFQLASETVVADSNSLETEKAFLFCRPGSVLRGRMCVNCPLGTSYSLEHSTCESCLMGSYQDEEGQLECKLCPPRTHTEYLHSRSISECKAQCKQGTYSSSGLETCESCPLGTYQPDFGSRSCLPCPETTTTVKRGAVDISACGVPCPVGEFSRSGLTPCYPCPRDYYQPNAGKSFCLACPFYGTTTITGATSITDCSSFSSTFSAAEESIVPLAAPGPTQNKYEVFHECFLNPCHNSGTCQQLGRGYVCLCPPGYTGLKCETDIDECSSLPCLNGGICRDKVGGFTCECSSGYTGQICEENINECSSSPCLNKGTCTDGLASYRCTCVSGYVGVHCETDVNECQSSPCLNNAVCKDQVGGFSCKCPPGFLGTRCEKNVDECLSQPCQNGATCKDGANSFRCQCPAGFTGPHCELNINECQSNPCRNQATCVDELNSYSCKCRPGFSGRRCETEQPSGFNLDFEVSGIYGYVLLDGVLPTLHAITCAFWMKSSDVINYGTPISYALEGNKDNTFLLTDYNGWVLYVNGKEKITNCPSVNDGIWHHIAITWTSTGGAWRVYIDGELSDSGTGLSVGKAIPGGGALVLGQEQDKKGEGFNPAESFVGSISQLNLWDYVLSPQQVKSLASSCPEELSRGNVLAWPDFVSGITGKVKVDSSSIFCSDCPSLEGSVPHLRPASGDRKPGSKVSLFCDPGFQMVGNPVQYCLNQGQWSQPLPHCERIRCGLPPTLENGFYSAEDLHAGSTVTYQCTSGYYLLGDSRMFCTDNGSWNGISPSCLDVDECAVGSDCSEHASCLNTNGSYICSCKPPYTGDGKNCAEPVKCKAPENPENGHSLGKIYSVGAEVTFSCEEGHQLVGVRKITCLESGEWDHLRPSCEAISCGAPPVPENGGVDGSAFTYGSKVRYRCDKGYTLAGDEESACLASGSWSHSSPVCELVKCSQPENINNGKYILSGLTYLSIASYSCEDGYSLQGPSLIECTASGSWDRAPPSCQLVSCGEPPMVKDALTTGSNFTFGNMVTYTCKEGYTLAGPDTIICQANGKWNSSNHQCLAVSCDEPPNVDHASPETAHRLFGDTAFYYCADGYSLADNSQLICNAQGNWVPPEGQAVPRCIAHFCEKPPSVSYSILESVSKAKFAAGSVVSFKCMEGFVLNTSAKIECLRGGQWSPSPLSVQCIPVRCGEPPSITNGYPSGTNYSFGAVVAYSCHKGFYIKGEKKSTCEATGQWSRPLPTCHPVSCNEPPKVENGFLEHTTGRTFESEARFQCNPGYKAVGSPVFVCQANRHWHSDAPLSCTPLNCGKPPPIQNGFLRGESFEVGSKVQFVCNEGYELVGDNSWTCQKSGKWSKKPSPKCVPTKCAEPPLLENQLVLKELTSEVGVMTISCKEGHALQGPSVLKCLPSGQWNGSFPVCKLVLCQSPPLIPFGVPASSGALHFGSTVKYLCVDGFFLRGNPIILCQVDGTWSSPLPECVPVECPQPEEILNGIIHVQGLAYLSTTLYTCKPGFELVGNTTTLCGENGQWLGGKPMCRPIECPEPKEILNGQFSSVSFQYGQTITYSCDRGFRLEGPKSLTCLETGNWDMDAPSCNAIHCSDPQPIENGFVEGADYRYGAMIIYSCFPGFQVVGHAMQTCEETGWSSSSPTCVPIDCGLPPHIDFGDCTRVSDGQGYFVQEDDMMEVPYLTPHPQHLEATAKASEITEESLVPHASQFLYGTTVSYRCEPGYELLGIPVLVCQEDGTWNGTAPSCISIECDLPVAPENGFLHFTQTTMGSAAQYSCKPGHVLEGSHLRLCLQNKQWSGTVPRCEVISCSEPNPLGNGSIKGNDYSYLGVLHYECDSGYVLNGTEKRTCQENKQWDGHEPVCLPVDCGSPPVPTNGQVTGEEYTFQKEIAYSCGEGFILEGARSRVCLTNGSWSGTTPSCVPVRCPAPPQVANGVTDGLDYGFKKEVTFHCLEGYVLQGTPKLTCQSNGTWDAEVPICKPATCGPPADLPQGFPNGFSFFHGGHIQYQCFTGYKLHGNPSRRCLPDGSWSGSTPSCLPCTCSTPIIQQGTVNATDLGCGKTVQIECFKGFKLLGLPEITCDANGQWSDFPLCEHADCGPLPTVPNGIVIKGSPSEDNVVTYSCRPGYIIQGSSDLICTEKGIWSEPYPTCEPVSCGPPPTVANAVATGEAHTYESKVKLRCLEGYVVDTDTDTFTCQQDGRWFPERINCSPKTCPVPSNRTRIRVHGDDFQVNRQVSVSCTEGFTYDGADRSTCQPDGTWEPPLSEESCIPVVCGQPESPEHGFVVGSEYSFGSTVVYQCDPGYELEGNRERVCQENRQWSGRVAVCRESRCEAPAEFPNGKAVLENTTSGPSLLFSCHRGYTLEGPPEAHCTANGTWSHLAPLCKPNPCPVPFVIPENALLSEREFYVNQNVSIKCREGFLLKGNGIITCNPDETWTQTNARCEKISCGPPTHVENAIARGVHYQYGDMVTFSCYSGYMLEGSLRSVCLENGTWTPPPICRAVCRFPCQNGGVCQRPNACSCPDGWMGRLCEEPICILPCLNGGRCVAPYRCDCPAGWTGSRCHTATCQSPCLNGGKCVRPNRCHCLSSWTGHDCSRKRRSGL</sequence>
<proteinExistence type="evidence at protein level"/>
<gene>
    <name type="primary">Svep1</name>
</gene>
<dbReference type="EMBL" id="AABR03040659">
    <property type="status" value="NOT_ANNOTATED_CDS"/>
    <property type="molecule type" value="Genomic_DNA"/>
</dbReference>
<dbReference type="EMBL" id="AABR03041327">
    <property type="status" value="NOT_ANNOTATED_CDS"/>
    <property type="molecule type" value="Genomic_DNA"/>
</dbReference>
<dbReference type="EMBL" id="AABR03041522">
    <property type="status" value="NOT_ANNOTATED_CDS"/>
    <property type="molecule type" value="Genomic_DNA"/>
</dbReference>
<dbReference type="EMBL" id="AABR03042206">
    <property type="status" value="NOT_ANNOTATED_CDS"/>
    <property type="molecule type" value="Genomic_DNA"/>
</dbReference>
<dbReference type="EMBL" id="AABR03044351">
    <property type="status" value="NOT_ANNOTATED_CDS"/>
    <property type="molecule type" value="Genomic_DNA"/>
</dbReference>
<dbReference type="EMBL" id="AABR03044745">
    <property type="status" value="NOT_ANNOTATED_CDS"/>
    <property type="molecule type" value="Genomic_DNA"/>
</dbReference>
<dbReference type="EMBL" id="AABR03045322">
    <property type="status" value="NOT_ANNOTATED_CDS"/>
    <property type="molecule type" value="Genomic_DNA"/>
</dbReference>
<dbReference type="FunCoup" id="P0C6B8">
    <property type="interactions" value="103"/>
</dbReference>
<dbReference type="STRING" id="10116.ENSRNOP00000069065"/>
<dbReference type="CarbonylDB" id="P0C6B8"/>
<dbReference type="GlyCosmos" id="P0C6B8">
    <property type="glycosylation" value="2 sites, No reported glycans"/>
</dbReference>
<dbReference type="GlyGen" id="P0C6B8">
    <property type="glycosylation" value="6 sites"/>
</dbReference>
<dbReference type="PhosphoSitePlus" id="P0C6B8"/>
<dbReference type="PaxDb" id="10116-ENSRNOP00000050549"/>
<dbReference type="UCSC" id="RGD:1588987">
    <property type="organism name" value="rat"/>
</dbReference>
<dbReference type="AGR" id="RGD:1588987"/>
<dbReference type="RGD" id="1588987">
    <property type="gene designation" value="Svep1"/>
</dbReference>
<dbReference type="eggNOG" id="KOG1217">
    <property type="taxonomic scope" value="Eukaryota"/>
</dbReference>
<dbReference type="eggNOG" id="KOG4297">
    <property type="taxonomic scope" value="Eukaryota"/>
</dbReference>
<dbReference type="InParanoid" id="P0C6B8"/>
<dbReference type="OrthoDB" id="406096at2759"/>
<dbReference type="PhylomeDB" id="P0C6B8"/>
<dbReference type="PRO" id="PR:P0C6B8"/>
<dbReference type="Proteomes" id="UP000002494">
    <property type="component" value="Unplaced"/>
</dbReference>
<dbReference type="GO" id="GO:0005737">
    <property type="term" value="C:cytoplasm"/>
    <property type="evidence" value="ECO:0000266"/>
    <property type="project" value="RGD"/>
</dbReference>
<dbReference type="GO" id="GO:0005576">
    <property type="term" value="C:extracellular region"/>
    <property type="evidence" value="ECO:0000250"/>
    <property type="project" value="UniProtKB"/>
</dbReference>
<dbReference type="GO" id="GO:0005615">
    <property type="term" value="C:extracellular space"/>
    <property type="evidence" value="ECO:0000266"/>
    <property type="project" value="RGD"/>
</dbReference>
<dbReference type="GO" id="GO:0016020">
    <property type="term" value="C:membrane"/>
    <property type="evidence" value="ECO:0007669"/>
    <property type="project" value="UniProtKB-SubCell"/>
</dbReference>
<dbReference type="GO" id="GO:0005634">
    <property type="term" value="C:nucleus"/>
    <property type="evidence" value="ECO:0000266"/>
    <property type="project" value="RGD"/>
</dbReference>
<dbReference type="GO" id="GO:0005509">
    <property type="term" value="F:calcium ion binding"/>
    <property type="evidence" value="ECO:0007669"/>
    <property type="project" value="InterPro"/>
</dbReference>
<dbReference type="GO" id="GO:0003682">
    <property type="term" value="F:chromatin binding"/>
    <property type="evidence" value="ECO:0000266"/>
    <property type="project" value="RGD"/>
</dbReference>
<dbReference type="GO" id="GO:0005178">
    <property type="term" value="F:integrin binding"/>
    <property type="evidence" value="ECO:0000266"/>
    <property type="project" value="RGD"/>
</dbReference>
<dbReference type="GO" id="GO:0098640">
    <property type="term" value="F:integrin binding involved in cell-matrix adhesion"/>
    <property type="evidence" value="ECO:0000250"/>
    <property type="project" value="UniProtKB"/>
</dbReference>
<dbReference type="GO" id="GO:0008544">
    <property type="term" value="P:epidermis development"/>
    <property type="evidence" value="ECO:0000266"/>
    <property type="project" value="RGD"/>
</dbReference>
<dbReference type="GO" id="GO:0010467">
    <property type="term" value="P:gene expression"/>
    <property type="evidence" value="ECO:0000266"/>
    <property type="project" value="RGD"/>
</dbReference>
<dbReference type="GO" id="GO:0003017">
    <property type="term" value="P:lymph circulation"/>
    <property type="evidence" value="ECO:0000266"/>
    <property type="project" value="RGD"/>
</dbReference>
<dbReference type="GO" id="GO:0001945">
    <property type="term" value="P:lymph vessel development"/>
    <property type="evidence" value="ECO:0000266"/>
    <property type="project" value="RGD"/>
</dbReference>
<dbReference type="GO" id="GO:0036303">
    <property type="term" value="P:lymph vessel morphogenesis"/>
    <property type="evidence" value="ECO:0000266"/>
    <property type="project" value="RGD"/>
</dbReference>
<dbReference type="GO" id="GO:0045906">
    <property type="term" value="P:negative regulation of vasoconstriction"/>
    <property type="evidence" value="ECO:0000250"/>
    <property type="project" value="UniProtKB"/>
</dbReference>
<dbReference type="GO" id="GO:0010572">
    <property type="term" value="P:positive regulation of platelet activation"/>
    <property type="evidence" value="ECO:0000266"/>
    <property type="project" value="RGD"/>
</dbReference>
<dbReference type="GO" id="GO:0048014">
    <property type="term" value="P:Tie signaling pathway"/>
    <property type="evidence" value="ECO:0000266"/>
    <property type="project" value="RGD"/>
</dbReference>
<dbReference type="GO" id="GO:0120193">
    <property type="term" value="P:tight junction organization"/>
    <property type="evidence" value="ECO:0000266"/>
    <property type="project" value="RGD"/>
</dbReference>
<dbReference type="CDD" id="cd00033">
    <property type="entry name" value="CCP"/>
    <property type="match status" value="32"/>
</dbReference>
<dbReference type="CDD" id="cd00054">
    <property type="entry name" value="EGF_CA"/>
    <property type="match status" value="8"/>
</dbReference>
<dbReference type="CDD" id="cd00152">
    <property type="entry name" value="PTX"/>
    <property type="match status" value="1"/>
</dbReference>
<dbReference type="CDD" id="cd01450">
    <property type="entry name" value="vWFA_subfamily_ECM"/>
    <property type="match status" value="1"/>
</dbReference>
<dbReference type="FunFam" id="2.10.70.10:FF:000011">
    <property type="entry name" value="CUB and sushi domain-containing protein 3 isoform A"/>
    <property type="match status" value="6"/>
</dbReference>
<dbReference type="FunFam" id="2.10.25.10:FF:000038">
    <property type="entry name" value="Fibrillin 2"/>
    <property type="match status" value="1"/>
</dbReference>
<dbReference type="FunFam" id="2.10.25.10:FF:000004">
    <property type="entry name" value="Neurogenic locus notch 1"/>
    <property type="match status" value="2"/>
</dbReference>
<dbReference type="FunFam" id="2.60.120.200:FF:000012">
    <property type="entry name" value="neuronal pentraxin receptor"/>
    <property type="match status" value="1"/>
</dbReference>
<dbReference type="FunFam" id="2.10.25.10:FF:000143">
    <property type="entry name" value="Protein crumbs 1"/>
    <property type="match status" value="1"/>
</dbReference>
<dbReference type="FunFam" id="2.10.25.10:FF:000122">
    <property type="entry name" value="Protein crumbs homolog 2"/>
    <property type="match status" value="1"/>
</dbReference>
<dbReference type="FunFam" id="2.10.25.10:FF:000225">
    <property type="entry name" value="Sushi, von Willebrand factor type A, EGF and pentraxin domain containing 1"/>
    <property type="match status" value="1"/>
</dbReference>
<dbReference type="FunFam" id="2.10.70.10:FF:000183">
    <property type="entry name" value="Sushi, von Willebrand factor type A, EGF and pentraxin domain containing 1"/>
    <property type="match status" value="1"/>
</dbReference>
<dbReference type="FunFam" id="2.10.25.10:FF:000553">
    <property type="entry name" value="Sushi, von Willebrand factor type A, EGF and pentraxin domain-containing 1"/>
    <property type="match status" value="1"/>
</dbReference>
<dbReference type="FunFam" id="2.10.50.10:FF:000018">
    <property type="entry name" value="Sushi, von Willebrand factor type A, EGF and pentraxin domain-containing 1"/>
    <property type="match status" value="2"/>
</dbReference>
<dbReference type="FunFam" id="2.10.25.10:FF:000640">
    <property type="entry name" value="Sushi, von Willebrand factor type A, EGF and pentraxin domain-containing protein 1"/>
    <property type="match status" value="1"/>
</dbReference>
<dbReference type="FunFam" id="2.10.50.10:FF:000070">
    <property type="entry name" value="Sushi, von Willebrand factor type A, EGF and pentraxin domain-containing protein 1"/>
    <property type="match status" value="1"/>
</dbReference>
<dbReference type="FunFam" id="2.10.70.10:FF:000257">
    <property type="entry name" value="Sushi, von Willebrand factor type A, EGF and pentraxin domain-containing protein 1"/>
    <property type="match status" value="1"/>
</dbReference>
<dbReference type="FunFam" id="3.40.50.410:FF:000070">
    <property type="entry name" value="sushi, von Willebrand factor type A, EGF and pentraxin domain-containing protein 1"/>
    <property type="match status" value="1"/>
</dbReference>
<dbReference type="FunFam" id="2.10.70.10:FF:000003">
    <property type="entry name" value="Versican core protein"/>
    <property type="match status" value="1"/>
</dbReference>
<dbReference type="Gene3D" id="2.60.120.200">
    <property type="match status" value="1"/>
</dbReference>
<dbReference type="Gene3D" id="2.10.70.10">
    <property type="entry name" value="Complement Module, domain 1"/>
    <property type="match status" value="33"/>
</dbReference>
<dbReference type="Gene3D" id="2.10.25.10">
    <property type="entry name" value="Laminin"/>
    <property type="match status" value="10"/>
</dbReference>
<dbReference type="Gene3D" id="2.10.50.10">
    <property type="entry name" value="Tumor Necrosis Factor Receptor, subunit A, domain 2"/>
    <property type="match status" value="4"/>
</dbReference>
<dbReference type="Gene3D" id="3.40.50.410">
    <property type="entry name" value="von Willebrand factor, type A domain"/>
    <property type="match status" value="1"/>
</dbReference>
<dbReference type="InterPro" id="IPR013320">
    <property type="entry name" value="ConA-like_dom_sf"/>
</dbReference>
<dbReference type="InterPro" id="IPR001881">
    <property type="entry name" value="EGF-like_Ca-bd_dom"/>
</dbReference>
<dbReference type="InterPro" id="IPR000742">
    <property type="entry name" value="EGF-like_dom"/>
</dbReference>
<dbReference type="InterPro" id="IPR000152">
    <property type="entry name" value="EGF-type_Asp/Asn_hydroxyl_site"/>
</dbReference>
<dbReference type="InterPro" id="IPR018097">
    <property type="entry name" value="EGF_Ca-bd_CS"/>
</dbReference>
<dbReference type="InterPro" id="IPR009030">
    <property type="entry name" value="Growth_fac_rcpt_cys_sf"/>
</dbReference>
<dbReference type="InterPro" id="IPR003410">
    <property type="entry name" value="HYR_dom"/>
</dbReference>
<dbReference type="InterPro" id="IPR049883">
    <property type="entry name" value="NOTCH1_EGF-like"/>
</dbReference>
<dbReference type="InterPro" id="IPR001759">
    <property type="entry name" value="Pentraxin-related"/>
</dbReference>
<dbReference type="InterPro" id="IPR051277">
    <property type="entry name" value="SEZ6_CSMD_C4BPB_Regulators"/>
</dbReference>
<dbReference type="InterPro" id="IPR035976">
    <property type="entry name" value="Sushi/SCR/CCP_sf"/>
</dbReference>
<dbReference type="InterPro" id="IPR000436">
    <property type="entry name" value="Sushi_SCR_CCP_dom"/>
</dbReference>
<dbReference type="InterPro" id="IPR011641">
    <property type="entry name" value="Tyr-kin_ephrin_A/B_rcpt-like"/>
</dbReference>
<dbReference type="InterPro" id="IPR002035">
    <property type="entry name" value="VWF_A"/>
</dbReference>
<dbReference type="InterPro" id="IPR036465">
    <property type="entry name" value="vWFA_dom_sf"/>
</dbReference>
<dbReference type="PANTHER" id="PTHR45656">
    <property type="entry name" value="PROTEIN CBR-CLEC-78"/>
    <property type="match status" value="1"/>
</dbReference>
<dbReference type="PANTHER" id="PTHR45656:SF4">
    <property type="entry name" value="PROTEIN CBR-CLEC-78"/>
    <property type="match status" value="1"/>
</dbReference>
<dbReference type="Pfam" id="PF00008">
    <property type="entry name" value="EGF"/>
    <property type="match status" value="6"/>
</dbReference>
<dbReference type="Pfam" id="PF07645">
    <property type="entry name" value="EGF_CA"/>
    <property type="match status" value="2"/>
</dbReference>
<dbReference type="Pfam" id="PF07699">
    <property type="entry name" value="Ephrin_rec_like"/>
    <property type="match status" value="4"/>
</dbReference>
<dbReference type="Pfam" id="PF02494">
    <property type="entry name" value="HYR"/>
    <property type="match status" value="2"/>
</dbReference>
<dbReference type="Pfam" id="PF00354">
    <property type="entry name" value="Pentaxin"/>
    <property type="match status" value="1"/>
</dbReference>
<dbReference type="Pfam" id="PF00084">
    <property type="entry name" value="Sushi"/>
    <property type="match status" value="32"/>
</dbReference>
<dbReference type="Pfam" id="PF00092">
    <property type="entry name" value="VWA"/>
    <property type="match status" value="1"/>
</dbReference>
<dbReference type="PRINTS" id="PR00895">
    <property type="entry name" value="PENTAXIN"/>
</dbReference>
<dbReference type="SMART" id="SM00032">
    <property type="entry name" value="CCP"/>
    <property type="match status" value="34"/>
</dbReference>
<dbReference type="SMART" id="SM00181">
    <property type="entry name" value="EGF"/>
    <property type="match status" value="11"/>
</dbReference>
<dbReference type="SMART" id="SM00179">
    <property type="entry name" value="EGF_CA"/>
    <property type="match status" value="8"/>
</dbReference>
<dbReference type="SMART" id="SM01411">
    <property type="entry name" value="Ephrin_rec_like"/>
    <property type="match status" value="4"/>
</dbReference>
<dbReference type="SMART" id="SM00159">
    <property type="entry name" value="PTX"/>
    <property type="match status" value="1"/>
</dbReference>
<dbReference type="SMART" id="SM00327">
    <property type="entry name" value="VWA"/>
    <property type="match status" value="1"/>
</dbReference>
<dbReference type="SUPFAM" id="SSF57535">
    <property type="entry name" value="Complement control module/SCR domain"/>
    <property type="match status" value="33"/>
</dbReference>
<dbReference type="SUPFAM" id="SSF49899">
    <property type="entry name" value="Concanavalin A-like lectins/glucanases"/>
    <property type="match status" value="1"/>
</dbReference>
<dbReference type="SUPFAM" id="SSF57196">
    <property type="entry name" value="EGF/Laminin"/>
    <property type="match status" value="4"/>
</dbReference>
<dbReference type="SUPFAM" id="SSF57184">
    <property type="entry name" value="Growth factor receptor domain"/>
    <property type="match status" value="3"/>
</dbReference>
<dbReference type="SUPFAM" id="SSF53300">
    <property type="entry name" value="vWA-like"/>
    <property type="match status" value="1"/>
</dbReference>
<dbReference type="PROSITE" id="PS00010">
    <property type="entry name" value="ASX_HYDROXYL"/>
    <property type="match status" value="6"/>
</dbReference>
<dbReference type="PROSITE" id="PS00022">
    <property type="entry name" value="EGF_1"/>
    <property type="match status" value="9"/>
</dbReference>
<dbReference type="PROSITE" id="PS01186">
    <property type="entry name" value="EGF_2"/>
    <property type="match status" value="11"/>
</dbReference>
<dbReference type="PROSITE" id="PS50026">
    <property type="entry name" value="EGF_3"/>
    <property type="match status" value="9"/>
</dbReference>
<dbReference type="PROSITE" id="PS01187">
    <property type="entry name" value="EGF_CA"/>
    <property type="match status" value="6"/>
</dbReference>
<dbReference type="PROSITE" id="PS50825">
    <property type="entry name" value="HYR"/>
    <property type="match status" value="2"/>
</dbReference>
<dbReference type="PROSITE" id="PS51828">
    <property type="entry name" value="PTX_2"/>
    <property type="match status" value="1"/>
</dbReference>
<dbReference type="PROSITE" id="PS50923">
    <property type="entry name" value="SUSHI"/>
    <property type="match status" value="34"/>
</dbReference>
<dbReference type="PROSITE" id="PS50234">
    <property type="entry name" value="VWFA"/>
    <property type="match status" value="1"/>
</dbReference>
<organism>
    <name type="scientific">Rattus norvegicus</name>
    <name type="common">Rat</name>
    <dbReference type="NCBI Taxonomy" id="10116"/>
    <lineage>
        <taxon>Eukaryota</taxon>
        <taxon>Metazoa</taxon>
        <taxon>Chordata</taxon>
        <taxon>Craniata</taxon>
        <taxon>Vertebrata</taxon>
        <taxon>Euteleostomi</taxon>
        <taxon>Mammalia</taxon>
        <taxon>Eutheria</taxon>
        <taxon>Euarchontoglires</taxon>
        <taxon>Glires</taxon>
        <taxon>Rodentia</taxon>
        <taxon>Myomorpha</taxon>
        <taxon>Muroidea</taxon>
        <taxon>Muridae</taxon>
        <taxon>Murinae</taxon>
        <taxon>Rattus</taxon>
    </lineage>
</organism>
<feature type="signal peptide" evidence="4">
    <location>
        <begin position="1"/>
        <end position="17"/>
    </location>
</feature>
<feature type="chain" id="PRO_0000320180" description="Sushi, von Willebrand factor type A, EGF and pentraxin domain-containing protein 1">
    <location>
        <begin position="18"/>
        <end position="3564"/>
    </location>
</feature>
<feature type="domain" description="VWFA" evidence="7">
    <location>
        <begin position="84"/>
        <end position="265"/>
    </location>
</feature>
<feature type="domain" description="Sushi 1" evidence="8">
    <location>
        <begin position="377"/>
        <end position="436"/>
    </location>
</feature>
<feature type="domain" description="Sushi 2" evidence="8">
    <location>
        <begin position="437"/>
        <end position="496"/>
    </location>
</feature>
<feature type="domain" description="Sushi 3" evidence="8">
    <location>
        <begin position="497"/>
        <end position="561"/>
    </location>
</feature>
<feature type="domain" description="HYR 1" evidence="6">
    <location>
        <begin position="560"/>
        <end position="644"/>
    </location>
</feature>
<feature type="domain" description="HYR 2" evidence="6">
    <location>
        <begin position="645"/>
        <end position="724"/>
    </location>
</feature>
<feature type="domain" description="Sushi 4" evidence="8">
    <location>
        <begin position="725"/>
        <end position="789"/>
    </location>
</feature>
<feature type="domain" description="EGF-like 1" evidence="5">
    <location>
        <begin position="1188"/>
        <end position="1224"/>
    </location>
</feature>
<feature type="domain" description="EGF-like 2; calcium-binding" evidence="5">
    <location>
        <begin position="1226"/>
        <end position="1262"/>
    </location>
</feature>
<feature type="domain" description="EGF-like 3; calcium-binding" evidence="5">
    <location>
        <begin position="1264"/>
        <end position="1300"/>
    </location>
</feature>
<feature type="domain" description="EGF-like 4; calcium-binding" evidence="5">
    <location>
        <begin position="1302"/>
        <end position="1338"/>
    </location>
</feature>
<feature type="domain" description="EGF-like 5; calcium-binding" evidence="5">
    <location>
        <begin position="1340"/>
        <end position="1376"/>
    </location>
</feature>
<feature type="domain" description="EGF-like 6; calcium-binding" evidence="5">
    <location>
        <begin position="1378"/>
        <end position="1414"/>
    </location>
</feature>
<feature type="domain" description="Pentraxin (PTX)" evidence="9">
    <location>
        <begin position="1419"/>
        <end position="1623"/>
    </location>
</feature>
<feature type="domain" description="Sushi 5" evidence="8">
    <location>
        <begin position="1624"/>
        <end position="1682"/>
    </location>
</feature>
<feature type="domain" description="Sushi 6" evidence="8">
    <location>
        <begin position="1683"/>
        <end position="1740"/>
    </location>
</feature>
<feature type="domain" description="EGF-like 7; calcium-binding" evidence="5">
    <location>
        <begin position="1740"/>
        <end position="1779"/>
    </location>
</feature>
<feature type="domain" description="Sushi 7" evidence="8">
    <location>
        <begin position="1776"/>
        <end position="1839"/>
    </location>
</feature>
<feature type="domain" description="Sushi 8" evidence="8">
    <location>
        <begin position="1840"/>
        <end position="1897"/>
    </location>
</feature>
<feature type="domain" description="Sushi 9" evidence="8">
    <location>
        <begin position="1898"/>
        <end position="1955"/>
    </location>
</feature>
<feature type="domain" description="Sushi 10" evidence="8">
    <location>
        <begin position="1956"/>
        <end position="2013"/>
    </location>
</feature>
<feature type="domain" description="Sushi 11" evidence="8">
    <location>
        <begin position="2014"/>
        <end position="2075"/>
    </location>
</feature>
<feature type="domain" description="Sushi 12" evidence="8">
    <location>
        <begin position="2076"/>
        <end position="2138"/>
    </location>
</feature>
<feature type="domain" description="Sushi 13" evidence="8">
    <location>
        <begin position="2139"/>
        <end position="2196"/>
    </location>
</feature>
<feature type="domain" description="Sushi 14" evidence="8">
    <location>
        <begin position="2197"/>
        <end position="2256"/>
    </location>
</feature>
<feature type="domain" description="Sushi 15" evidence="8">
    <location>
        <begin position="2257"/>
        <end position="2315"/>
    </location>
</feature>
<feature type="domain" description="Sushi 16" evidence="8">
    <location>
        <begin position="2316"/>
        <end position="2373"/>
    </location>
</feature>
<feature type="domain" description="Sushi 17" evidence="8">
    <location>
        <begin position="2374"/>
        <end position="2432"/>
    </location>
</feature>
<feature type="domain" description="Sushi 18" evidence="8">
    <location>
        <begin position="2433"/>
        <end position="2490"/>
    </location>
</feature>
<feature type="domain" description="Sushi 19" evidence="8">
    <location>
        <begin position="2491"/>
        <end position="2548"/>
    </location>
</feature>
<feature type="domain" description="Sushi 20" evidence="8">
    <location>
        <begin position="2549"/>
        <end position="2605"/>
    </location>
</feature>
<feature type="domain" description="Sushi 21" evidence="8">
    <location>
        <begin position="2659"/>
        <end position="2708"/>
    </location>
</feature>
<feature type="domain" description="Sushi 22" evidence="8">
    <location>
        <begin position="2709"/>
        <end position="2766"/>
    </location>
</feature>
<feature type="domain" description="Sushi 23" evidence="8">
    <location>
        <begin position="2767"/>
        <end position="2824"/>
    </location>
</feature>
<feature type="domain" description="Sushi 24" evidence="8">
    <location>
        <begin position="2825"/>
        <end position="2882"/>
    </location>
</feature>
<feature type="domain" description="Sushi 25" evidence="8">
    <location>
        <begin position="2883"/>
        <end position="2940"/>
    </location>
</feature>
<feature type="domain" description="Sushi 26" evidence="8">
    <location>
        <begin position="2941"/>
        <end position="2998"/>
    </location>
</feature>
<feature type="domain" description="Sushi 27" evidence="8">
    <location>
        <begin position="2999"/>
        <end position="3054"/>
    </location>
</feature>
<feature type="domain" description="Sushi 28" evidence="8">
    <location>
        <begin position="3055"/>
        <end position="3112"/>
    </location>
</feature>
<feature type="domain" description="Sushi 29" evidence="8">
    <location>
        <begin position="3113"/>
        <end position="3171"/>
    </location>
</feature>
<feature type="domain" description="Sushi 30" evidence="8">
    <location>
        <begin position="3172"/>
        <end position="3231"/>
    </location>
</feature>
<feature type="domain" description="Sushi 31" evidence="8">
    <location>
        <begin position="3232"/>
        <end position="3289"/>
    </location>
</feature>
<feature type="domain" description="Sushi 32" evidence="8">
    <location>
        <begin position="3290"/>
        <end position="3347"/>
    </location>
</feature>
<feature type="domain" description="Sushi 33" evidence="8">
    <location>
        <begin position="3348"/>
        <end position="3406"/>
    </location>
</feature>
<feature type="domain" description="Sushi 34" evidence="8">
    <location>
        <begin position="3407"/>
        <end position="3463"/>
    </location>
</feature>
<feature type="domain" description="EGF-like 8" evidence="5">
    <location>
        <begin position="3493"/>
        <end position="3525"/>
    </location>
</feature>
<feature type="domain" description="EGF-like 9" evidence="5">
    <location>
        <begin position="3526"/>
        <end position="3557"/>
    </location>
</feature>
<feature type="region of interest" description="Important for the interaction with integrin ITGA9:ITGB1" evidence="2">
    <location>
        <begin position="2634"/>
        <end position="2641"/>
    </location>
</feature>
<feature type="site" description="Required for interaction with integrin ITGA9:ITGB1" evidence="2">
    <location>
        <position position="2637"/>
    </location>
</feature>
<feature type="glycosylation site" description="N-linked (GlcNAc...) asparagine" evidence="4">
    <location>
        <position position="187"/>
    </location>
</feature>
<feature type="glycosylation site" description="N-linked (GlcNAc...) asparagine" evidence="4">
    <location>
        <position position="1760"/>
    </location>
</feature>
<feature type="disulfide bond" evidence="1">
    <location>
        <begin position="379"/>
        <end position="421"/>
    </location>
</feature>
<feature type="disulfide bond" evidence="1">
    <location>
        <begin position="407"/>
        <end position="434"/>
    </location>
</feature>
<feature type="disulfide bond" evidence="1">
    <location>
        <begin position="439"/>
        <end position="481"/>
    </location>
</feature>
<feature type="disulfide bond" evidence="1">
    <location>
        <begin position="467"/>
        <end position="494"/>
    </location>
</feature>
<feature type="disulfide bond" evidence="1">
    <location>
        <begin position="499"/>
        <end position="544"/>
    </location>
</feature>
<feature type="disulfide bond" evidence="1">
    <location>
        <begin position="530"/>
        <end position="559"/>
    </location>
</feature>
<feature type="disulfide bond" evidence="1">
    <location>
        <begin position="727"/>
        <end position="769"/>
    </location>
</feature>
<feature type="disulfide bond" evidence="1">
    <location>
        <begin position="753"/>
        <end position="787"/>
    </location>
</feature>
<feature type="disulfide bond" evidence="1">
    <location>
        <begin position="1192"/>
        <end position="1203"/>
    </location>
</feature>
<feature type="disulfide bond" evidence="1">
    <location>
        <begin position="1197"/>
        <end position="1212"/>
    </location>
</feature>
<feature type="disulfide bond" evidence="1">
    <location>
        <begin position="1214"/>
        <end position="1223"/>
    </location>
</feature>
<feature type="disulfide bond" evidence="1">
    <location>
        <begin position="1230"/>
        <end position="1241"/>
    </location>
</feature>
<feature type="disulfide bond" evidence="1">
    <location>
        <begin position="1235"/>
        <end position="1250"/>
    </location>
</feature>
<feature type="disulfide bond" evidence="1">
    <location>
        <begin position="1252"/>
        <end position="1261"/>
    </location>
</feature>
<feature type="disulfide bond" evidence="1">
    <location>
        <begin position="1268"/>
        <end position="1279"/>
    </location>
</feature>
<feature type="disulfide bond" evidence="1">
    <location>
        <begin position="1273"/>
        <end position="1288"/>
    </location>
</feature>
<feature type="disulfide bond" evidence="1">
    <location>
        <begin position="1290"/>
        <end position="1299"/>
    </location>
</feature>
<feature type="disulfide bond" evidence="1">
    <location>
        <begin position="1306"/>
        <end position="1317"/>
    </location>
</feature>
<feature type="disulfide bond" evidence="1">
    <location>
        <begin position="1311"/>
        <end position="1326"/>
    </location>
</feature>
<feature type="disulfide bond" evidence="1">
    <location>
        <begin position="1328"/>
        <end position="1337"/>
    </location>
</feature>
<feature type="disulfide bond" evidence="1">
    <location>
        <begin position="1344"/>
        <end position="1355"/>
    </location>
</feature>
<feature type="disulfide bond" evidence="1">
    <location>
        <begin position="1349"/>
        <end position="1364"/>
    </location>
</feature>
<feature type="disulfide bond" evidence="1">
    <location>
        <begin position="1366"/>
        <end position="1375"/>
    </location>
</feature>
<feature type="disulfide bond" evidence="1">
    <location>
        <begin position="1382"/>
        <end position="1393"/>
    </location>
</feature>
<feature type="disulfide bond" evidence="1">
    <location>
        <begin position="1387"/>
        <end position="1402"/>
    </location>
</feature>
<feature type="disulfide bond" evidence="1">
    <location>
        <begin position="1404"/>
        <end position="1413"/>
    </location>
</feature>
<feature type="disulfide bond" evidence="1">
    <location>
        <begin position="1626"/>
        <end position="1667"/>
    </location>
</feature>
<feature type="disulfide bond" evidence="1">
    <location>
        <begin position="1653"/>
        <end position="1680"/>
    </location>
</feature>
<feature type="disulfide bond" evidence="1">
    <location>
        <begin position="1685"/>
        <end position="1725"/>
    </location>
</feature>
<feature type="disulfide bond" evidence="1">
    <location>
        <begin position="1711"/>
        <end position="1738"/>
    </location>
</feature>
<feature type="disulfide bond" evidence="1">
    <location>
        <begin position="1744"/>
        <end position="1756"/>
    </location>
</feature>
<feature type="disulfide bond" evidence="1">
    <location>
        <begin position="1750"/>
        <end position="1765"/>
    </location>
</feature>
<feature type="disulfide bond" evidence="1">
    <location>
        <begin position="1767"/>
        <end position="1778"/>
    </location>
</feature>
<feature type="disulfide bond" evidence="1">
    <location>
        <begin position="1784"/>
        <end position="1824"/>
    </location>
</feature>
<feature type="disulfide bond" evidence="1">
    <location>
        <begin position="1810"/>
        <end position="1837"/>
    </location>
</feature>
<feature type="disulfide bond" evidence="1">
    <location>
        <begin position="1842"/>
        <end position="1882"/>
    </location>
</feature>
<feature type="disulfide bond" evidence="1">
    <location>
        <begin position="1868"/>
        <end position="1895"/>
    </location>
</feature>
<feature type="disulfide bond" evidence="1">
    <location>
        <begin position="1900"/>
        <end position="1940"/>
    </location>
</feature>
<feature type="disulfide bond" evidence="1">
    <location>
        <begin position="1926"/>
        <end position="1953"/>
    </location>
</feature>
<feature type="disulfide bond" evidence="1">
    <location>
        <begin position="1958"/>
        <end position="1998"/>
    </location>
</feature>
<feature type="disulfide bond" evidence="1">
    <location>
        <begin position="1984"/>
        <end position="2011"/>
    </location>
</feature>
<feature type="disulfide bond" evidence="1">
    <location>
        <begin position="2016"/>
        <end position="2056"/>
    </location>
</feature>
<feature type="disulfide bond" evidence="1">
    <location>
        <begin position="2042"/>
        <end position="2073"/>
    </location>
</feature>
<feature type="disulfide bond" evidence="1">
    <location>
        <begin position="2078"/>
        <end position="2121"/>
    </location>
</feature>
<feature type="disulfide bond" evidence="1">
    <location>
        <begin position="2107"/>
        <end position="2136"/>
    </location>
</feature>
<feature type="disulfide bond" evidence="1">
    <location>
        <begin position="2141"/>
        <end position="2181"/>
    </location>
</feature>
<feature type="disulfide bond" evidence="1">
    <location>
        <begin position="2167"/>
        <end position="2194"/>
    </location>
</feature>
<feature type="disulfide bond" evidence="1">
    <location>
        <begin position="2199"/>
        <end position="2240"/>
    </location>
</feature>
<feature type="disulfide bond" evidence="1">
    <location>
        <begin position="2226"/>
        <end position="2254"/>
    </location>
</feature>
<feature type="disulfide bond" evidence="1">
    <location>
        <begin position="2259"/>
        <end position="2299"/>
    </location>
</feature>
<feature type="disulfide bond" evidence="1">
    <location>
        <begin position="2285"/>
        <end position="2313"/>
    </location>
</feature>
<feature type="disulfide bond" evidence="1">
    <location>
        <begin position="2318"/>
        <end position="2358"/>
    </location>
</feature>
<feature type="disulfide bond" evidence="1">
    <location>
        <begin position="2344"/>
        <end position="2371"/>
    </location>
</feature>
<feature type="disulfide bond" evidence="1">
    <location>
        <begin position="2376"/>
        <end position="2417"/>
    </location>
</feature>
<feature type="disulfide bond" evidence="1">
    <location>
        <begin position="2403"/>
        <end position="2430"/>
    </location>
</feature>
<feature type="disulfide bond" evidence="1">
    <location>
        <begin position="2435"/>
        <end position="2475"/>
    </location>
</feature>
<feature type="disulfide bond" evidence="1">
    <location>
        <begin position="2461"/>
        <end position="2488"/>
    </location>
</feature>
<feature type="disulfide bond" evidence="1">
    <location>
        <begin position="2493"/>
        <end position="2533"/>
    </location>
</feature>
<feature type="disulfide bond" evidence="1">
    <location>
        <begin position="2519"/>
        <end position="2546"/>
    </location>
</feature>
<feature type="disulfide bond" evidence="1">
    <location>
        <begin position="2551"/>
        <end position="2591"/>
    </location>
</feature>
<feature type="disulfide bond" evidence="1">
    <location>
        <begin position="2577"/>
        <end position="2603"/>
    </location>
</feature>
<feature type="disulfide bond" evidence="1">
    <location>
        <begin position="2679"/>
        <end position="2706"/>
    </location>
</feature>
<feature type="disulfide bond" evidence="1">
    <location>
        <begin position="2711"/>
        <end position="2751"/>
    </location>
</feature>
<feature type="disulfide bond" evidence="1">
    <location>
        <begin position="2737"/>
        <end position="2764"/>
    </location>
</feature>
<feature type="disulfide bond" evidence="1">
    <location>
        <begin position="2769"/>
        <end position="2809"/>
    </location>
</feature>
<feature type="disulfide bond" evidence="1">
    <location>
        <begin position="2795"/>
        <end position="2822"/>
    </location>
</feature>
<feature type="disulfide bond" evidence="1">
    <location>
        <begin position="2827"/>
        <end position="2867"/>
    </location>
</feature>
<feature type="disulfide bond" evidence="1">
    <location>
        <begin position="2853"/>
        <end position="2880"/>
    </location>
</feature>
<feature type="disulfide bond" evidence="1">
    <location>
        <begin position="2885"/>
        <end position="2925"/>
    </location>
</feature>
<feature type="disulfide bond" evidence="1">
    <location>
        <begin position="2911"/>
        <end position="2938"/>
    </location>
</feature>
<feature type="disulfide bond" evidence="1">
    <location>
        <begin position="2943"/>
        <end position="2983"/>
    </location>
</feature>
<feature type="disulfide bond" evidence="1">
    <location>
        <begin position="2969"/>
        <end position="2996"/>
    </location>
</feature>
<feature type="disulfide bond" evidence="1">
    <location>
        <begin position="3001"/>
        <end position="3040"/>
    </location>
</feature>
<feature type="disulfide bond" evidence="1">
    <location>
        <begin position="3026"/>
        <end position="3052"/>
    </location>
</feature>
<feature type="disulfide bond" evidence="1">
    <location>
        <begin position="3057"/>
        <end position="3097"/>
    </location>
</feature>
<feature type="disulfide bond" evidence="1">
    <location>
        <begin position="3083"/>
        <end position="3110"/>
    </location>
</feature>
<feature type="disulfide bond" evidence="1">
    <location>
        <begin position="3115"/>
        <end position="3156"/>
    </location>
</feature>
<feature type="disulfide bond" evidence="1">
    <location>
        <begin position="3141"/>
        <end position="3169"/>
    </location>
</feature>
<feature type="disulfide bond" evidence="1">
    <location>
        <begin position="3174"/>
        <end position="3214"/>
    </location>
</feature>
<feature type="disulfide bond" evidence="1">
    <location>
        <begin position="3200"/>
        <end position="3229"/>
    </location>
</feature>
<feature type="disulfide bond" evidence="1">
    <location>
        <begin position="3234"/>
        <end position="3274"/>
    </location>
</feature>
<feature type="disulfide bond" evidence="1">
    <location>
        <begin position="3260"/>
        <end position="3287"/>
    </location>
</feature>
<feature type="disulfide bond" evidence="1">
    <location>
        <begin position="3292"/>
        <end position="3332"/>
    </location>
</feature>
<feature type="disulfide bond" evidence="1">
    <location>
        <begin position="3318"/>
        <end position="3345"/>
    </location>
</feature>
<feature type="disulfide bond" evidence="1">
    <location>
        <begin position="3350"/>
        <end position="3391"/>
    </location>
</feature>
<feature type="disulfide bond" evidence="1">
    <location>
        <begin position="3377"/>
        <end position="3404"/>
    </location>
</feature>
<feature type="disulfide bond" evidence="1">
    <location>
        <begin position="3409"/>
        <end position="3449"/>
    </location>
</feature>
<feature type="disulfide bond" evidence="1">
    <location>
        <begin position="3435"/>
        <end position="3461"/>
    </location>
</feature>
<feature type="disulfide bond" evidence="1">
    <location>
        <begin position="3497"/>
        <end position="3507"/>
    </location>
</feature>
<feature type="disulfide bond" evidence="1">
    <location>
        <begin position="3501"/>
        <end position="3513"/>
    </location>
</feature>
<feature type="disulfide bond" evidence="1">
    <location>
        <begin position="3515"/>
        <end position="3524"/>
    </location>
</feature>
<feature type="disulfide bond" evidence="1">
    <location>
        <begin position="3529"/>
        <end position="3539"/>
    </location>
</feature>
<feature type="disulfide bond" evidence="1">
    <location>
        <begin position="3533"/>
        <end position="3545"/>
    </location>
</feature>
<feature type="disulfide bond" evidence="1">
    <location>
        <begin position="3547"/>
        <end position="3556"/>
    </location>
</feature>